<keyword id="KW-0963">Cytoplasm</keyword>
<keyword id="KW-0690">Ribosome biogenesis</keyword>
<accession>A9N8V5</accession>
<gene>
    <name evidence="1" type="primary">rbfA</name>
    <name type="ordered locus">COXBURSA331_A1599</name>
</gene>
<comment type="function">
    <text evidence="1">One of several proteins that assist in the late maturation steps of the functional core of the 30S ribosomal subunit. Associates with free 30S ribosomal subunits (but not with 30S subunits that are part of 70S ribosomes or polysomes). Required for efficient processing of 16S rRNA. May interact with the 5'-terminal helix region of 16S rRNA.</text>
</comment>
<comment type="subunit">
    <text evidence="1">Monomer. Binds 30S ribosomal subunits, but not 50S ribosomal subunits or 70S ribosomes.</text>
</comment>
<comment type="subcellular location">
    <subcellularLocation>
        <location evidence="1">Cytoplasm</location>
    </subcellularLocation>
</comment>
<comment type="similarity">
    <text evidence="1">Belongs to the RbfA family.</text>
</comment>
<name>RBFA_COXBR</name>
<protein>
    <recommendedName>
        <fullName evidence="1">Ribosome-binding factor A</fullName>
    </recommendedName>
</protein>
<evidence type="ECO:0000255" key="1">
    <source>
        <dbReference type="HAMAP-Rule" id="MF_00003"/>
    </source>
</evidence>
<organism>
    <name type="scientific">Coxiella burnetii (strain RSA 331 / Henzerling II)</name>
    <dbReference type="NCBI Taxonomy" id="360115"/>
    <lineage>
        <taxon>Bacteria</taxon>
        <taxon>Pseudomonadati</taxon>
        <taxon>Pseudomonadota</taxon>
        <taxon>Gammaproteobacteria</taxon>
        <taxon>Legionellales</taxon>
        <taxon>Coxiellaceae</taxon>
        <taxon>Coxiella</taxon>
    </lineage>
</organism>
<dbReference type="EMBL" id="CP000890">
    <property type="protein sequence ID" value="ABX77536.1"/>
    <property type="molecule type" value="Genomic_DNA"/>
</dbReference>
<dbReference type="RefSeq" id="WP_005769039.1">
    <property type="nucleotide sequence ID" value="NC_010117.1"/>
</dbReference>
<dbReference type="SMR" id="A9N8V5"/>
<dbReference type="KEGG" id="cbs:COXBURSA331_A1599"/>
<dbReference type="HOGENOM" id="CLU_089475_5_1_6"/>
<dbReference type="GO" id="GO:0005829">
    <property type="term" value="C:cytosol"/>
    <property type="evidence" value="ECO:0007669"/>
    <property type="project" value="TreeGrafter"/>
</dbReference>
<dbReference type="GO" id="GO:0043024">
    <property type="term" value="F:ribosomal small subunit binding"/>
    <property type="evidence" value="ECO:0007669"/>
    <property type="project" value="TreeGrafter"/>
</dbReference>
<dbReference type="GO" id="GO:0030490">
    <property type="term" value="P:maturation of SSU-rRNA"/>
    <property type="evidence" value="ECO:0007669"/>
    <property type="project" value="UniProtKB-UniRule"/>
</dbReference>
<dbReference type="Gene3D" id="3.30.300.20">
    <property type="match status" value="1"/>
</dbReference>
<dbReference type="HAMAP" id="MF_00003">
    <property type="entry name" value="RbfA"/>
    <property type="match status" value="1"/>
</dbReference>
<dbReference type="InterPro" id="IPR015946">
    <property type="entry name" value="KH_dom-like_a/b"/>
</dbReference>
<dbReference type="InterPro" id="IPR000238">
    <property type="entry name" value="RbfA"/>
</dbReference>
<dbReference type="InterPro" id="IPR023799">
    <property type="entry name" value="RbfA_dom_sf"/>
</dbReference>
<dbReference type="InterPro" id="IPR020053">
    <property type="entry name" value="Ribosome-bd_factorA_CS"/>
</dbReference>
<dbReference type="NCBIfam" id="NF010390">
    <property type="entry name" value="PRK13817.1"/>
    <property type="match status" value="1"/>
</dbReference>
<dbReference type="NCBIfam" id="TIGR00082">
    <property type="entry name" value="rbfA"/>
    <property type="match status" value="1"/>
</dbReference>
<dbReference type="PANTHER" id="PTHR33515">
    <property type="entry name" value="RIBOSOME-BINDING FACTOR A, CHLOROPLASTIC-RELATED"/>
    <property type="match status" value="1"/>
</dbReference>
<dbReference type="PANTHER" id="PTHR33515:SF1">
    <property type="entry name" value="RIBOSOME-BINDING FACTOR A, CHLOROPLASTIC-RELATED"/>
    <property type="match status" value="1"/>
</dbReference>
<dbReference type="Pfam" id="PF02033">
    <property type="entry name" value="RBFA"/>
    <property type="match status" value="1"/>
</dbReference>
<dbReference type="SUPFAM" id="SSF89919">
    <property type="entry name" value="Ribosome-binding factor A, RbfA"/>
    <property type="match status" value="1"/>
</dbReference>
<dbReference type="PROSITE" id="PS01319">
    <property type="entry name" value="RBFA"/>
    <property type="match status" value="1"/>
</dbReference>
<feature type="chain" id="PRO_1000073758" description="Ribosome-binding factor A">
    <location>
        <begin position="1"/>
        <end position="119"/>
    </location>
</feature>
<reference key="1">
    <citation type="submission" date="2007-11" db="EMBL/GenBank/DDBJ databases">
        <title>Genome sequencing of phylogenetically and phenotypically diverse Coxiella burnetii isolates.</title>
        <authorList>
            <person name="Seshadri R."/>
            <person name="Samuel J.E."/>
        </authorList>
    </citation>
    <scope>NUCLEOTIDE SEQUENCE [LARGE SCALE GENOMIC DNA]</scope>
    <source>
        <strain>RSA 331 / Henzerling II</strain>
    </source>
</reference>
<proteinExistence type="inferred from homology"/>
<sequence>MSQRQQRVADLIHQQLAELLKKEVRDSRLSKISLTAVSISPDLKQAKVFYSLLENQNEKEVQKALNKATGYLRHLLAQATVLRYVPKLEFVYDESIERAHRISLLIERALKKDDSDESS</sequence>